<proteinExistence type="inferred from homology"/>
<feature type="chain" id="PRO_0000099048" description="Tryptophan synthase beta chain 2">
    <location>
        <begin position="1"/>
        <end position="440"/>
    </location>
</feature>
<feature type="modified residue" description="N6-(pyridoxal phosphate)lysine" evidence="1">
    <location>
        <position position="110"/>
    </location>
</feature>
<keyword id="KW-0028">Amino-acid biosynthesis</keyword>
<keyword id="KW-0057">Aromatic amino acid biosynthesis</keyword>
<keyword id="KW-0456">Lyase</keyword>
<keyword id="KW-0663">Pyridoxal phosphate</keyword>
<keyword id="KW-0822">Tryptophan biosynthesis</keyword>
<organism>
    <name type="scientific">Pyrococcus abyssi (strain GE5 / Orsay)</name>
    <dbReference type="NCBI Taxonomy" id="272844"/>
    <lineage>
        <taxon>Archaea</taxon>
        <taxon>Methanobacteriati</taxon>
        <taxon>Methanobacteriota</taxon>
        <taxon>Thermococci</taxon>
        <taxon>Thermococcales</taxon>
        <taxon>Thermococcaceae</taxon>
        <taxon>Pyrococcus</taxon>
    </lineage>
</organism>
<dbReference type="EC" id="4.2.1.20"/>
<dbReference type="EMBL" id="AJ248284">
    <property type="protein sequence ID" value="CAB49501.1"/>
    <property type="status" value="ALT_INIT"/>
    <property type="molecule type" value="Genomic_DNA"/>
</dbReference>
<dbReference type="EMBL" id="HE613800">
    <property type="protein sequence ID" value="CCE69971.1"/>
    <property type="molecule type" value="Genomic_DNA"/>
</dbReference>
<dbReference type="PIR" id="F75177">
    <property type="entry name" value="F75177"/>
</dbReference>
<dbReference type="RefSeq" id="WP_048146581.1">
    <property type="nucleotide sequence ID" value="NC_000868.1"/>
</dbReference>
<dbReference type="SMR" id="Q9V150"/>
<dbReference type="STRING" id="272844.PAB1970"/>
<dbReference type="KEGG" id="pab:PAB1970"/>
<dbReference type="PATRIC" id="fig|272844.11.peg.617"/>
<dbReference type="eggNOG" id="arCOG01432">
    <property type="taxonomic scope" value="Archaea"/>
</dbReference>
<dbReference type="HOGENOM" id="CLU_042858_1_0_2"/>
<dbReference type="OrthoDB" id="371827at2157"/>
<dbReference type="UniPathway" id="UPA00035">
    <property type="reaction ID" value="UER00044"/>
</dbReference>
<dbReference type="Proteomes" id="UP000000810">
    <property type="component" value="Chromosome"/>
</dbReference>
<dbReference type="Proteomes" id="UP000009139">
    <property type="component" value="Chromosome"/>
</dbReference>
<dbReference type="GO" id="GO:0005737">
    <property type="term" value="C:cytoplasm"/>
    <property type="evidence" value="ECO:0007669"/>
    <property type="project" value="TreeGrafter"/>
</dbReference>
<dbReference type="GO" id="GO:0052684">
    <property type="term" value="F:L-serine hydro-lyase (adding indole, L-tryptophan-forming) activity"/>
    <property type="evidence" value="ECO:0007669"/>
    <property type="project" value="TreeGrafter"/>
</dbReference>
<dbReference type="GO" id="GO:0030170">
    <property type="term" value="F:pyridoxal phosphate binding"/>
    <property type="evidence" value="ECO:0007669"/>
    <property type="project" value="InterPro"/>
</dbReference>
<dbReference type="GO" id="GO:0004834">
    <property type="term" value="F:tryptophan synthase activity"/>
    <property type="evidence" value="ECO:0007669"/>
    <property type="project" value="UniProtKB-UniRule"/>
</dbReference>
<dbReference type="CDD" id="cd06446">
    <property type="entry name" value="Trp-synth_B"/>
    <property type="match status" value="1"/>
</dbReference>
<dbReference type="Gene3D" id="3.40.50.1100">
    <property type="match status" value="2"/>
</dbReference>
<dbReference type="HAMAP" id="MF_00133">
    <property type="entry name" value="Trp_synth_beta"/>
    <property type="match status" value="1"/>
</dbReference>
<dbReference type="InterPro" id="IPR006316">
    <property type="entry name" value="Trp_synth_b-like"/>
</dbReference>
<dbReference type="InterPro" id="IPR006653">
    <property type="entry name" value="Trp_synth_b_CS"/>
</dbReference>
<dbReference type="InterPro" id="IPR006654">
    <property type="entry name" value="Trp_synth_beta"/>
</dbReference>
<dbReference type="InterPro" id="IPR023026">
    <property type="entry name" value="Trp_synth_beta/beta-like"/>
</dbReference>
<dbReference type="InterPro" id="IPR001926">
    <property type="entry name" value="TrpB-like_PALP"/>
</dbReference>
<dbReference type="InterPro" id="IPR036052">
    <property type="entry name" value="TrpB-like_PALP_sf"/>
</dbReference>
<dbReference type="NCBIfam" id="NF009057">
    <property type="entry name" value="PRK12391.1"/>
    <property type="match status" value="1"/>
</dbReference>
<dbReference type="NCBIfam" id="TIGR01415">
    <property type="entry name" value="trpB_rel"/>
    <property type="match status" value="1"/>
</dbReference>
<dbReference type="PANTHER" id="PTHR48077:SF6">
    <property type="entry name" value="TRYPTOPHAN SYNTHASE"/>
    <property type="match status" value="1"/>
</dbReference>
<dbReference type="PANTHER" id="PTHR48077">
    <property type="entry name" value="TRYPTOPHAN SYNTHASE-RELATED"/>
    <property type="match status" value="1"/>
</dbReference>
<dbReference type="Pfam" id="PF00291">
    <property type="entry name" value="PALP"/>
    <property type="match status" value="1"/>
</dbReference>
<dbReference type="PIRSF" id="PIRSF001413">
    <property type="entry name" value="Trp_syn_beta"/>
    <property type="match status" value="1"/>
</dbReference>
<dbReference type="PIRSF" id="PIRSF500824">
    <property type="entry name" value="TrpB_prok"/>
    <property type="match status" value="1"/>
</dbReference>
<dbReference type="SUPFAM" id="SSF53686">
    <property type="entry name" value="Tryptophan synthase beta subunit-like PLP-dependent enzymes"/>
    <property type="match status" value="1"/>
</dbReference>
<dbReference type="PROSITE" id="PS00168">
    <property type="entry name" value="TRP_SYNTHASE_BETA"/>
    <property type="match status" value="1"/>
</dbReference>
<evidence type="ECO:0000250" key="1"/>
<evidence type="ECO:0000305" key="2"/>
<name>TRPB2_PYRAB</name>
<reference key="1">
    <citation type="journal article" date="2003" name="Mol. Microbiol.">
        <title>An integrated analysis of the genome of the hyperthermophilic archaeon Pyrococcus abyssi.</title>
        <authorList>
            <person name="Cohen G.N."/>
            <person name="Barbe V."/>
            <person name="Flament D."/>
            <person name="Galperin M."/>
            <person name="Heilig R."/>
            <person name="Lecompte O."/>
            <person name="Poch O."/>
            <person name="Prieur D."/>
            <person name="Querellou J."/>
            <person name="Ripp R."/>
            <person name="Thierry J.-C."/>
            <person name="Van der Oost J."/>
            <person name="Weissenbach J."/>
            <person name="Zivanovic Y."/>
            <person name="Forterre P."/>
        </authorList>
    </citation>
    <scope>NUCLEOTIDE SEQUENCE [LARGE SCALE GENOMIC DNA]</scope>
    <source>
        <strain>GE5 / Orsay</strain>
    </source>
</reference>
<reference key="2">
    <citation type="journal article" date="2012" name="Curr. Microbiol.">
        <title>Re-annotation of two hyperthermophilic archaea Pyrococcus abyssi GE5 and Pyrococcus furiosus DSM 3638.</title>
        <authorList>
            <person name="Gao J."/>
            <person name="Wang J."/>
        </authorList>
    </citation>
    <scope>GENOME REANNOTATION</scope>
    <source>
        <strain>GE5 / Orsay</strain>
    </source>
</reference>
<sequence>MKVVLPDGRIPRRWYNILPDLPEPLDPPLDPETEEPIDIEKLKRIFAEELVKQEISRERYIEIPGELRKLYSKIGRPTPLFRATNLEKLLGTPARIYFKYEGATVTGSHKINTALAQAYYAKKQGIERLVTETGAGQWGTALSLAGALLGLKVRVYMARASYQQKPYRKTLMRIYGAEVFPSPSENTEVGKRFLKEDPNHPGSLGIAISEAIEDVLKDEKARYSLGSVLNHVLMHQTVIGLEAKEQMEEFEEPDVIIGCVGGGSNFAGLAYPFVKDVLDGKSEYEFIAVEPKAAPTMTRGVYTYDYGDSAGLTPKLKMHTLGHRYYVPPIHAGGLRYHGLAPTLSVLINHGIVKPIAYHQTEVFEAAVLFAKAEGIVPAPESAHAVKAVIDKALEARREGKEMVILFNLSGHGLLDLKGYEDYLDGKLEDYEPRDLPVKS</sequence>
<protein>
    <recommendedName>
        <fullName>Tryptophan synthase beta chain 2</fullName>
        <ecNumber>4.2.1.20</ecNumber>
    </recommendedName>
</protein>
<gene>
    <name type="primary">trpB2</name>
    <name type="synonym">trpB-2</name>
    <name type="ordered locus">PYRAB05790</name>
    <name type="ORF">PAB1970</name>
</gene>
<accession>Q9V150</accession>
<accession>G8ZJ44</accession>
<comment type="function">
    <text evidence="1">The beta subunit is responsible for the synthesis of L-tryptophan from indole and L-serine.</text>
</comment>
<comment type="catalytic activity">
    <reaction>
        <text>(1S,2R)-1-C-(indol-3-yl)glycerol 3-phosphate + L-serine = D-glyceraldehyde 3-phosphate + L-tryptophan + H2O</text>
        <dbReference type="Rhea" id="RHEA:10532"/>
        <dbReference type="ChEBI" id="CHEBI:15377"/>
        <dbReference type="ChEBI" id="CHEBI:33384"/>
        <dbReference type="ChEBI" id="CHEBI:57912"/>
        <dbReference type="ChEBI" id="CHEBI:58866"/>
        <dbReference type="ChEBI" id="CHEBI:59776"/>
        <dbReference type="EC" id="4.2.1.20"/>
    </reaction>
</comment>
<comment type="cofactor">
    <cofactor evidence="1">
        <name>pyridoxal 5'-phosphate</name>
        <dbReference type="ChEBI" id="CHEBI:597326"/>
    </cofactor>
</comment>
<comment type="pathway">
    <text>Amino-acid biosynthesis; L-tryptophan biosynthesis; L-tryptophan from chorismate: step 5/5.</text>
</comment>
<comment type="subunit">
    <text evidence="1">Tetramer of two alpha and two beta chains.</text>
</comment>
<comment type="similarity">
    <text evidence="2">Belongs to the TrpB family.</text>
</comment>
<comment type="sequence caution" evidence="2">
    <conflict type="erroneous initiation">
        <sequence resource="EMBL-CDS" id="CAB49501"/>
    </conflict>
    <text>Extended N-terminus.</text>
</comment>